<feature type="chain" id="PRO_1000050258" description="4-hydroxy-tetrahydrodipicolinate synthase">
    <location>
        <begin position="1"/>
        <end position="294"/>
    </location>
</feature>
<feature type="active site" description="Proton donor/acceptor" evidence="1">
    <location>
        <position position="135"/>
    </location>
</feature>
<feature type="active site" description="Schiff-base intermediate with substrate" evidence="1">
    <location>
        <position position="163"/>
    </location>
</feature>
<feature type="binding site" evidence="1">
    <location>
        <position position="47"/>
    </location>
    <ligand>
        <name>pyruvate</name>
        <dbReference type="ChEBI" id="CHEBI:15361"/>
    </ligand>
</feature>
<feature type="binding site" evidence="1">
    <location>
        <position position="205"/>
    </location>
    <ligand>
        <name>pyruvate</name>
        <dbReference type="ChEBI" id="CHEBI:15361"/>
    </ligand>
</feature>
<feature type="site" description="Part of a proton relay during catalysis" evidence="1">
    <location>
        <position position="46"/>
    </location>
</feature>
<feature type="site" description="Part of a proton relay during catalysis" evidence="1">
    <location>
        <position position="109"/>
    </location>
</feature>
<gene>
    <name evidence="1" type="primary">dapA</name>
    <name type="ordered locus">A1G_03345</name>
</gene>
<protein>
    <recommendedName>
        <fullName evidence="1">4-hydroxy-tetrahydrodipicolinate synthase</fullName>
        <shortName evidence="1">HTPA synthase</shortName>
        <ecNumber evidence="1">4.3.3.7</ecNumber>
    </recommendedName>
</protein>
<evidence type="ECO:0000255" key="1">
    <source>
        <dbReference type="HAMAP-Rule" id="MF_00418"/>
    </source>
</evidence>
<evidence type="ECO:0000305" key="2"/>
<proteinExistence type="inferred from homology"/>
<comment type="function">
    <text evidence="1">Catalyzes the condensation of (S)-aspartate-beta-semialdehyde [(S)-ASA] and pyruvate to 4-hydroxy-tetrahydrodipicolinate (HTPA).</text>
</comment>
<comment type="catalytic activity">
    <reaction evidence="1">
        <text>L-aspartate 4-semialdehyde + pyruvate = (2S,4S)-4-hydroxy-2,3,4,5-tetrahydrodipicolinate + H2O + H(+)</text>
        <dbReference type="Rhea" id="RHEA:34171"/>
        <dbReference type="ChEBI" id="CHEBI:15361"/>
        <dbReference type="ChEBI" id="CHEBI:15377"/>
        <dbReference type="ChEBI" id="CHEBI:15378"/>
        <dbReference type="ChEBI" id="CHEBI:67139"/>
        <dbReference type="ChEBI" id="CHEBI:537519"/>
        <dbReference type="EC" id="4.3.3.7"/>
    </reaction>
</comment>
<comment type="pathway">
    <text evidence="1">Amino-acid biosynthesis; L-lysine biosynthesis via DAP pathway; (S)-tetrahydrodipicolinate from L-aspartate: step 3/4.</text>
</comment>
<comment type="subunit">
    <text evidence="1">Homotetramer; dimer of dimers.</text>
</comment>
<comment type="subcellular location">
    <subcellularLocation>
        <location evidence="1">Cytoplasm</location>
    </subcellularLocation>
</comment>
<comment type="similarity">
    <text evidence="1">Belongs to the DapA family.</text>
</comment>
<comment type="caution">
    <text evidence="2">Was originally thought to be a dihydrodipicolinate synthase (DHDPS), catalyzing the condensation of (S)-aspartate-beta-semialdehyde [(S)-ASA] and pyruvate to dihydrodipicolinate (DHDP). However, it was shown in E.coli that the product of the enzymatic reaction is not dihydrodipicolinate but in fact (4S)-4-hydroxy-2,3,4,5-tetrahydro-(2S)-dipicolinic acid (HTPA), and that the consecutive dehydration reaction leading to DHDP is not spontaneous but catalyzed by DapB.</text>
</comment>
<reference key="1">
    <citation type="submission" date="2007-09" db="EMBL/GenBank/DDBJ databases">
        <title>Complete genome sequence of Rickettsia rickettsii.</title>
        <authorList>
            <person name="Madan A."/>
            <person name="Fahey J."/>
            <person name="Helton E."/>
            <person name="Ketteman M."/>
            <person name="Madan A."/>
            <person name="Rodrigues S."/>
            <person name="Sanchez A."/>
            <person name="Dasch G."/>
            <person name="Eremeeva M."/>
        </authorList>
    </citation>
    <scope>NUCLEOTIDE SEQUENCE [LARGE SCALE GENOMIC DNA]</scope>
    <source>
        <strain>Sheila Smith</strain>
    </source>
</reference>
<accession>A8GS25</accession>
<name>DAPA_RICRS</name>
<organism>
    <name type="scientific">Rickettsia rickettsii (strain Sheila Smith)</name>
    <dbReference type="NCBI Taxonomy" id="392021"/>
    <lineage>
        <taxon>Bacteria</taxon>
        <taxon>Pseudomonadati</taxon>
        <taxon>Pseudomonadota</taxon>
        <taxon>Alphaproteobacteria</taxon>
        <taxon>Rickettsiales</taxon>
        <taxon>Rickettsiaceae</taxon>
        <taxon>Rickettsieae</taxon>
        <taxon>Rickettsia</taxon>
        <taxon>spotted fever group</taxon>
    </lineage>
</organism>
<dbReference type="EC" id="4.3.3.7" evidence="1"/>
<dbReference type="EMBL" id="CP000848">
    <property type="protein sequence ID" value="ABV76200.1"/>
    <property type="molecule type" value="Genomic_DNA"/>
</dbReference>
<dbReference type="RefSeq" id="WP_012150786.1">
    <property type="nucleotide sequence ID" value="NZ_CP121767.1"/>
</dbReference>
<dbReference type="SMR" id="A8GS25"/>
<dbReference type="GeneID" id="79937339"/>
<dbReference type="KEGG" id="rri:A1G_03345"/>
<dbReference type="HOGENOM" id="CLU_049343_7_1_5"/>
<dbReference type="UniPathway" id="UPA00034">
    <property type="reaction ID" value="UER00017"/>
</dbReference>
<dbReference type="Proteomes" id="UP000006832">
    <property type="component" value="Chromosome"/>
</dbReference>
<dbReference type="GO" id="GO:0005737">
    <property type="term" value="C:cytoplasm"/>
    <property type="evidence" value="ECO:0007669"/>
    <property type="project" value="UniProtKB-SubCell"/>
</dbReference>
<dbReference type="GO" id="GO:0008700">
    <property type="term" value="F:(R,S)-4-hydroxy-2-oxoglutarate aldolase activity"/>
    <property type="evidence" value="ECO:0007669"/>
    <property type="project" value="TreeGrafter"/>
</dbReference>
<dbReference type="GO" id="GO:0008840">
    <property type="term" value="F:4-hydroxy-tetrahydrodipicolinate synthase activity"/>
    <property type="evidence" value="ECO:0007669"/>
    <property type="project" value="UniProtKB-UniRule"/>
</dbReference>
<dbReference type="GO" id="GO:0019877">
    <property type="term" value="P:diaminopimelate biosynthetic process"/>
    <property type="evidence" value="ECO:0007669"/>
    <property type="project" value="UniProtKB-UniRule"/>
</dbReference>
<dbReference type="GO" id="GO:0009436">
    <property type="term" value="P:glyoxylate catabolic process"/>
    <property type="evidence" value="ECO:0007669"/>
    <property type="project" value="TreeGrafter"/>
</dbReference>
<dbReference type="GO" id="GO:0009089">
    <property type="term" value="P:lysine biosynthetic process via diaminopimelate"/>
    <property type="evidence" value="ECO:0007669"/>
    <property type="project" value="UniProtKB-UniRule"/>
</dbReference>
<dbReference type="CDD" id="cd00950">
    <property type="entry name" value="DHDPS"/>
    <property type="match status" value="1"/>
</dbReference>
<dbReference type="Gene3D" id="3.20.20.70">
    <property type="entry name" value="Aldolase class I"/>
    <property type="match status" value="1"/>
</dbReference>
<dbReference type="HAMAP" id="MF_00418">
    <property type="entry name" value="DapA"/>
    <property type="match status" value="1"/>
</dbReference>
<dbReference type="InterPro" id="IPR013785">
    <property type="entry name" value="Aldolase_TIM"/>
</dbReference>
<dbReference type="InterPro" id="IPR005263">
    <property type="entry name" value="DapA"/>
</dbReference>
<dbReference type="InterPro" id="IPR002220">
    <property type="entry name" value="DapA-like"/>
</dbReference>
<dbReference type="InterPro" id="IPR020625">
    <property type="entry name" value="Schiff_base-form_aldolases_AS"/>
</dbReference>
<dbReference type="InterPro" id="IPR020624">
    <property type="entry name" value="Schiff_base-form_aldolases_CS"/>
</dbReference>
<dbReference type="NCBIfam" id="TIGR00674">
    <property type="entry name" value="dapA"/>
    <property type="match status" value="1"/>
</dbReference>
<dbReference type="PANTHER" id="PTHR12128:SF66">
    <property type="entry name" value="4-HYDROXY-2-OXOGLUTARATE ALDOLASE, MITOCHONDRIAL"/>
    <property type="match status" value="1"/>
</dbReference>
<dbReference type="PANTHER" id="PTHR12128">
    <property type="entry name" value="DIHYDRODIPICOLINATE SYNTHASE"/>
    <property type="match status" value="1"/>
</dbReference>
<dbReference type="Pfam" id="PF00701">
    <property type="entry name" value="DHDPS"/>
    <property type="match status" value="1"/>
</dbReference>
<dbReference type="PIRSF" id="PIRSF001365">
    <property type="entry name" value="DHDPS"/>
    <property type="match status" value="1"/>
</dbReference>
<dbReference type="PRINTS" id="PR00146">
    <property type="entry name" value="DHPICSNTHASE"/>
</dbReference>
<dbReference type="SMART" id="SM01130">
    <property type="entry name" value="DHDPS"/>
    <property type="match status" value="1"/>
</dbReference>
<dbReference type="SUPFAM" id="SSF51569">
    <property type="entry name" value="Aldolase"/>
    <property type="match status" value="1"/>
</dbReference>
<dbReference type="PROSITE" id="PS00665">
    <property type="entry name" value="DHDPS_1"/>
    <property type="match status" value="1"/>
</dbReference>
<dbReference type="PROSITE" id="PS00666">
    <property type="entry name" value="DHDPS_2"/>
    <property type="match status" value="1"/>
</dbReference>
<keyword id="KW-0028">Amino-acid biosynthesis</keyword>
<keyword id="KW-0963">Cytoplasm</keyword>
<keyword id="KW-0220">Diaminopimelate biosynthesis</keyword>
<keyword id="KW-0456">Lyase</keyword>
<keyword id="KW-0457">Lysine biosynthesis</keyword>
<keyword id="KW-0704">Schiff base</keyword>
<sequence>MHNIFKGLITALITPFKDNKLDLYALERIVKHQIKHEVDAILIAGSTGESSSLSFEEYKLLLQTSVEIVNKCIPIISGCSSNNTTYARALAAESTKIGVDGFMASPPSYVKPTQHGIYKHFEALHEACNLPIMLYSAPTRSGVDFSDETILRLSKLPRILALKDCGVDLERPLRIRATVKKDFNILTGNDEVVLAFNAQGGVGWTSVASNIVPNICKELLEKWNKNDTKGALEIHQKLLPLYTALFVESNPIPIKYAAHYLGLCENEIRPPLTEASDSAKKQIENIITSLSIKI</sequence>